<evidence type="ECO:0000250" key="1"/>
<evidence type="ECO:0000255" key="2"/>
<evidence type="ECO:0000256" key="3">
    <source>
        <dbReference type="SAM" id="MobiDB-lite"/>
    </source>
</evidence>
<evidence type="ECO:0000305" key="4"/>
<proteinExistence type="inferred from homology"/>
<protein>
    <recommendedName>
        <fullName>Mitochondrial import inner membrane translocase subunit tim54</fullName>
    </recommendedName>
</protein>
<reference key="1">
    <citation type="journal article" date="2005" name="Nature">
        <title>Genomic sequence of the pathogenic and allergenic filamentous fungus Aspergillus fumigatus.</title>
        <authorList>
            <person name="Nierman W.C."/>
            <person name="Pain A."/>
            <person name="Anderson M.J."/>
            <person name="Wortman J.R."/>
            <person name="Kim H.S."/>
            <person name="Arroyo J."/>
            <person name="Berriman M."/>
            <person name="Abe K."/>
            <person name="Archer D.B."/>
            <person name="Bermejo C."/>
            <person name="Bennett J.W."/>
            <person name="Bowyer P."/>
            <person name="Chen D."/>
            <person name="Collins M."/>
            <person name="Coulsen R."/>
            <person name="Davies R."/>
            <person name="Dyer P.S."/>
            <person name="Farman M.L."/>
            <person name="Fedorova N."/>
            <person name="Fedorova N.D."/>
            <person name="Feldblyum T.V."/>
            <person name="Fischer R."/>
            <person name="Fosker N."/>
            <person name="Fraser A."/>
            <person name="Garcia J.L."/>
            <person name="Garcia M.J."/>
            <person name="Goble A."/>
            <person name="Goldman G.H."/>
            <person name="Gomi K."/>
            <person name="Griffith-Jones S."/>
            <person name="Gwilliam R."/>
            <person name="Haas B.J."/>
            <person name="Haas H."/>
            <person name="Harris D.E."/>
            <person name="Horiuchi H."/>
            <person name="Huang J."/>
            <person name="Humphray S."/>
            <person name="Jimenez J."/>
            <person name="Keller N."/>
            <person name="Khouri H."/>
            <person name="Kitamoto K."/>
            <person name="Kobayashi T."/>
            <person name="Konzack S."/>
            <person name="Kulkarni R."/>
            <person name="Kumagai T."/>
            <person name="Lafton A."/>
            <person name="Latge J.-P."/>
            <person name="Li W."/>
            <person name="Lord A."/>
            <person name="Lu C."/>
            <person name="Majoros W.H."/>
            <person name="May G.S."/>
            <person name="Miller B.L."/>
            <person name="Mohamoud Y."/>
            <person name="Molina M."/>
            <person name="Monod M."/>
            <person name="Mouyna I."/>
            <person name="Mulligan S."/>
            <person name="Murphy L.D."/>
            <person name="O'Neil S."/>
            <person name="Paulsen I."/>
            <person name="Penalva M.A."/>
            <person name="Pertea M."/>
            <person name="Price C."/>
            <person name="Pritchard B.L."/>
            <person name="Quail M.A."/>
            <person name="Rabbinowitsch E."/>
            <person name="Rawlins N."/>
            <person name="Rajandream M.A."/>
            <person name="Reichard U."/>
            <person name="Renauld H."/>
            <person name="Robson G.D."/>
            <person name="Rodriguez de Cordoba S."/>
            <person name="Rodriguez-Pena J.M."/>
            <person name="Ronning C.M."/>
            <person name="Rutter S."/>
            <person name="Salzberg S.L."/>
            <person name="Sanchez M."/>
            <person name="Sanchez-Ferrero J.C."/>
            <person name="Saunders D."/>
            <person name="Seeger K."/>
            <person name="Squares R."/>
            <person name="Squares S."/>
            <person name="Takeuchi M."/>
            <person name="Tekaia F."/>
            <person name="Turner G."/>
            <person name="Vazquez de Aldana C.R."/>
            <person name="Weidman J."/>
            <person name="White O."/>
            <person name="Woodward J.R."/>
            <person name="Yu J.-H."/>
            <person name="Fraser C.M."/>
            <person name="Galagan J.E."/>
            <person name="Asai K."/>
            <person name="Machida M."/>
            <person name="Hall N."/>
            <person name="Barrell B.G."/>
            <person name="Denning D.W."/>
        </authorList>
    </citation>
    <scope>NUCLEOTIDE SEQUENCE [LARGE SCALE GENOMIC DNA]</scope>
    <source>
        <strain>ATCC MYA-4609 / CBS 101355 / FGSC A1100 / Af293</strain>
    </source>
</reference>
<name>TIM54_ASPFU</name>
<accession>Q4WQ82</accession>
<comment type="function">
    <text evidence="1">Essential component of the TIM22 complex, a complex that mediates the import and insertion of multi-pass transmembrane proteins into the mitochondrial inner membrane. The TIM22 complex forms a twin-pore translocase that uses the membrane potential as external driving force (By similarity).</text>
</comment>
<comment type="subunit">
    <text evidence="1">Component of the TIM22 complex, whose core is composed of TIM22 and TIM54, associated with the 70 kDa heterohexamer composed of TIM9 and TIM10 (or TIM8 and TIM13).</text>
</comment>
<comment type="subcellular location">
    <subcellularLocation>
        <location evidence="1">Mitochondrion inner membrane</location>
        <topology evidence="1">Single-pass membrane protein</topology>
    </subcellularLocation>
</comment>
<comment type="similarity">
    <text evidence="4">Belongs to the TIM54 family.</text>
</comment>
<feature type="chain" id="PRO_0000228011" description="Mitochondrial import inner membrane translocase subunit tim54">
    <location>
        <begin position="1"/>
        <end position="439"/>
    </location>
</feature>
<feature type="topological domain" description="Mitochondrial matrix" evidence="2">
    <location>
        <begin position="1"/>
        <end position="70"/>
    </location>
</feature>
<feature type="transmembrane region" description="Helical" evidence="2">
    <location>
        <begin position="71"/>
        <end position="87"/>
    </location>
</feature>
<feature type="topological domain" description="Mitochondrial intermembrane" evidence="2">
    <location>
        <begin position="88"/>
        <end position="439"/>
    </location>
</feature>
<feature type="region of interest" description="Disordered" evidence="3">
    <location>
        <begin position="164"/>
        <end position="239"/>
    </location>
</feature>
<feature type="region of interest" description="Disordered" evidence="3">
    <location>
        <begin position="309"/>
        <end position="328"/>
    </location>
</feature>
<feature type="compositionally biased region" description="Basic and acidic residues" evidence="3">
    <location>
        <begin position="198"/>
        <end position="213"/>
    </location>
</feature>
<feature type="compositionally biased region" description="Polar residues" evidence="3">
    <location>
        <begin position="227"/>
        <end position="239"/>
    </location>
</feature>
<feature type="compositionally biased region" description="Low complexity" evidence="3">
    <location>
        <begin position="315"/>
        <end position="325"/>
    </location>
</feature>
<dbReference type="EMBL" id="AAHF01000005">
    <property type="protein sequence ID" value="EAL89602.1"/>
    <property type="molecule type" value="Genomic_DNA"/>
</dbReference>
<dbReference type="RefSeq" id="XP_751640.1">
    <property type="nucleotide sequence ID" value="XM_746547.1"/>
</dbReference>
<dbReference type="SMR" id="Q4WQ82"/>
<dbReference type="FunCoup" id="Q4WQ82">
    <property type="interactions" value="22"/>
</dbReference>
<dbReference type="STRING" id="330879.Q4WQ82"/>
<dbReference type="EnsemblFungi" id="EAL89602">
    <property type="protein sequence ID" value="EAL89602"/>
    <property type="gene ID" value="AFUA_4G11900"/>
</dbReference>
<dbReference type="GeneID" id="3509146"/>
<dbReference type="KEGG" id="afm:AFUA_4G11900"/>
<dbReference type="eggNOG" id="ENOG502QSFX">
    <property type="taxonomic scope" value="Eukaryota"/>
</dbReference>
<dbReference type="HOGENOM" id="CLU_039097_1_0_1"/>
<dbReference type="InParanoid" id="Q4WQ82"/>
<dbReference type="OMA" id="RNWMIFF"/>
<dbReference type="OrthoDB" id="5598305at2759"/>
<dbReference type="Proteomes" id="UP000002530">
    <property type="component" value="Chromosome 4"/>
</dbReference>
<dbReference type="GO" id="GO:0005737">
    <property type="term" value="C:cytoplasm"/>
    <property type="evidence" value="ECO:0000318"/>
    <property type="project" value="GO_Central"/>
</dbReference>
<dbReference type="GO" id="GO:0043231">
    <property type="term" value="C:intracellular membrane-bounded organelle"/>
    <property type="evidence" value="ECO:0000318"/>
    <property type="project" value="GO_Central"/>
</dbReference>
<dbReference type="GO" id="GO:0016020">
    <property type="term" value="C:membrane"/>
    <property type="evidence" value="ECO:0000318"/>
    <property type="project" value="GO_Central"/>
</dbReference>
<dbReference type="GO" id="GO:0005743">
    <property type="term" value="C:mitochondrial inner membrane"/>
    <property type="evidence" value="ECO:0007669"/>
    <property type="project" value="UniProtKB-SubCell"/>
</dbReference>
<dbReference type="GO" id="GO:0015031">
    <property type="term" value="P:protein transport"/>
    <property type="evidence" value="ECO:0007669"/>
    <property type="project" value="UniProtKB-KW"/>
</dbReference>
<dbReference type="InterPro" id="IPR050187">
    <property type="entry name" value="Lipid_Phosphate_FormReg"/>
</dbReference>
<dbReference type="InterPro" id="IPR021056">
    <property type="entry name" value="Mt_import_IM_translocase_Tim54"/>
</dbReference>
<dbReference type="PANTHER" id="PTHR12358:SF101">
    <property type="entry name" value="MITOCHONDRIAL IMPORT INNER MEMBRANE TRANSLOCASE SUBUNIT TIM54"/>
    <property type="match status" value="1"/>
</dbReference>
<dbReference type="PANTHER" id="PTHR12358">
    <property type="entry name" value="SPHINGOSINE KINASE"/>
    <property type="match status" value="1"/>
</dbReference>
<dbReference type="Pfam" id="PF11711">
    <property type="entry name" value="Tim54"/>
    <property type="match status" value="1"/>
</dbReference>
<sequence>MIFFTITGSLTAAIVYDRRERRRVQQKWCDLVAHLSKETLPIEQTRRKLTIFLSAPPGDGLRIAREHFKEYVKPILVAAALDYTVIEGRREGDVRAALAERIRKHRRKAGEPSSVVEEMSNEDIIADARQKIGVVEEPGPKGDLVIGRHTWKEYIRGLHEGWLGPLDPPSPPDAPVKGPSVPVEGSETPADGTPAEENTEKKEEAEKKDDKPAKPSGPTPAYVSPAEYSSRSLPPTLPQSLDSSVPIPFPHLLGFLNTPIRLYRYLSRRHLADEIGREVAGLVLASSSRPYHDGSFSSDSELSGAMVDAGASTLSSPDDMMPSSSAKYEQQTVLEKEESEWHKSVHKRDEENPDKEREWIDDIVLDPRIASRMQRSLLSADEEARSQRITEGKEYILGEERPAPVSFWQRMWIKYGYGEDEETIRMKPIIGNLDGADGE</sequence>
<organism>
    <name type="scientific">Aspergillus fumigatus (strain ATCC MYA-4609 / CBS 101355 / FGSC A1100 / Af293)</name>
    <name type="common">Neosartorya fumigata</name>
    <dbReference type="NCBI Taxonomy" id="330879"/>
    <lineage>
        <taxon>Eukaryota</taxon>
        <taxon>Fungi</taxon>
        <taxon>Dikarya</taxon>
        <taxon>Ascomycota</taxon>
        <taxon>Pezizomycotina</taxon>
        <taxon>Eurotiomycetes</taxon>
        <taxon>Eurotiomycetidae</taxon>
        <taxon>Eurotiales</taxon>
        <taxon>Aspergillaceae</taxon>
        <taxon>Aspergillus</taxon>
        <taxon>Aspergillus subgen. Fumigati</taxon>
    </lineage>
</organism>
<keyword id="KW-0472">Membrane</keyword>
<keyword id="KW-0496">Mitochondrion</keyword>
<keyword id="KW-0999">Mitochondrion inner membrane</keyword>
<keyword id="KW-0653">Protein transport</keyword>
<keyword id="KW-1185">Reference proteome</keyword>
<keyword id="KW-0811">Translocation</keyword>
<keyword id="KW-0812">Transmembrane</keyword>
<keyword id="KW-1133">Transmembrane helix</keyword>
<keyword id="KW-0813">Transport</keyword>
<gene>
    <name type="primary">tim54</name>
    <name type="ORF">AFUA_4G11900</name>
</gene>